<sequence>MSTASAAAVVKQKVEAPVHPMDARIDELTDYIMKNCLWQFHSRSWDRERQNAEILKKTKELLCGEPVDLSTSHDRCYWVDAVCLADDYREHYPWINSMSKEEIGSLMQGLKDRMDYLTITGSLNEELSDKHY</sequence>
<dbReference type="EC" id="1.18.6.1"/>
<dbReference type="EMBL" id="M23528">
    <property type="protein sequence ID" value="AAA82510.1"/>
    <property type="molecule type" value="Genomic_DNA"/>
</dbReference>
<dbReference type="PIR" id="C32057">
    <property type="entry name" value="C32057"/>
</dbReference>
<dbReference type="PDB" id="8BOQ">
    <property type="method" value="X-ray"/>
    <property type="resolution" value="1.55 A"/>
    <property type="chains" value="C/F=14-132"/>
</dbReference>
<dbReference type="PDBsum" id="8BOQ"/>
<dbReference type="SMR" id="P16268"/>
<dbReference type="OMA" id="CYWVDAV"/>
<dbReference type="BioCyc" id="MetaCyc:MONOMER-16522"/>
<dbReference type="GO" id="GO:0005524">
    <property type="term" value="F:ATP binding"/>
    <property type="evidence" value="ECO:0007669"/>
    <property type="project" value="UniProtKB-KW"/>
</dbReference>
<dbReference type="GO" id="GO:0005506">
    <property type="term" value="F:iron ion binding"/>
    <property type="evidence" value="ECO:0007669"/>
    <property type="project" value="InterPro"/>
</dbReference>
<dbReference type="GO" id="GO:0051536">
    <property type="term" value="F:iron-sulfur cluster binding"/>
    <property type="evidence" value="ECO:0007669"/>
    <property type="project" value="UniProtKB-KW"/>
</dbReference>
<dbReference type="GO" id="GO:0016163">
    <property type="term" value="F:nitrogenase activity"/>
    <property type="evidence" value="ECO:0007669"/>
    <property type="project" value="UniProtKB-EC"/>
</dbReference>
<dbReference type="GO" id="GO:0009399">
    <property type="term" value="P:nitrogen fixation"/>
    <property type="evidence" value="ECO:0007669"/>
    <property type="project" value="UniProtKB-KW"/>
</dbReference>
<dbReference type="InterPro" id="IPR014278">
    <property type="entry name" value="Nase_Fe-Fe_dsu"/>
</dbReference>
<dbReference type="InterPro" id="IPR004349">
    <property type="entry name" value="V/Nase_d_su"/>
</dbReference>
<dbReference type="NCBIfam" id="TIGR02929">
    <property type="entry name" value="anfG_nitrog"/>
    <property type="match status" value="1"/>
</dbReference>
<dbReference type="Pfam" id="PF03139">
    <property type="entry name" value="AnfG_VnfG"/>
    <property type="match status" value="1"/>
</dbReference>
<reference key="1">
    <citation type="journal article" date="1989" name="J. Bacteriol.">
        <title>Nucleotide sequence and mutational analysis of the structural genes (anfHDGK) for the second alternative nitrogenase from Azotobacter vinelandii.</title>
        <authorList>
            <person name="Joerger R.D."/>
            <person name="Jacobson M.R."/>
            <person name="Premakumar R."/>
            <person name="Wolfinger E.D."/>
            <person name="Bishop P.E."/>
        </authorList>
    </citation>
    <scope>NUCLEOTIDE SEQUENCE [GENOMIC DNA]</scope>
</reference>
<reference key="2">
    <citation type="journal article" date="1993" name="Biochem. J.">
        <title>Molybdenum-independent nitrogenases of Azotobacter vinelandii: a functional species of alternative nitrogenase-3 isolated from a molybdenum-tolerant strain contains an iron-molybdenum cofactor.</title>
        <authorList>
            <person name="Pau R.N."/>
            <person name="Eldridge M.E."/>
            <person name="Lowe D.J."/>
            <person name="Mitchenall L.A."/>
            <person name="Eady R.R."/>
        </authorList>
    </citation>
    <scope>PROTEIN SEQUENCE OF 2-8</scope>
    <source>
        <strain>RP306</strain>
    </source>
</reference>
<keyword id="KW-0002">3D-structure</keyword>
<keyword id="KW-0067">ATP-binding</keyword>
<keyword id="KW-0903">Direct protein sequencing</keyword>
<keyword id="KW-0408">Iron</keyword>
<keyword id="KW-0411">Iron-sulfur</keyword>
<keyword id="KW-0479">Metal-binding</keyword>
<keyword id="KW-0535">Nitrogen fixation</keyword>
<keyword id="KW-0547">Nucleotide-binding</keyword>
<keyword id="KW-0560">Oxidoreductase</keyword>
<proteinExistence type="evidence at protein level"/>
<accession>P16268</accession>
<feature type="initiator methionine" description="Removed" evidence="1">
    <location>
        <position position="1"/>
    </location>
</feature>
<feature type="chain" id="PRO_0000213563" description="Nitrogenase iron-iron protein delta chain">
    <location>
        <begin position="2"/>
        <end position="132"/>
    </location>
</feature>
<feature type="helix" evidence="2">
    <location>
        <begin position="22"/>
        <end position="35"/>
    </location>
</feature>
<feature type="helix" evidence="2">
    <location>
        <begin position="44"/>
        <end position="63"/>
    </location>
</feature>
<feature type="helix" evidence="2">
    <location>
        <begin position="72"/>
        <end position="91"/>
    </location>
</feature>
<feature type="helix" evidence="2">
    <location>
        <begin position="93"/>
        <end position="97"/>
    </location>
</feature>
<feature type="helix" evidence="2">
    <location>
        <begin position="100"/>
        <end position="118"/>
    </location>
</feature>
<feature type="turn" evidence="2">
    <location>
        <begin position="119"/>
        <end position="121"/>
    </location>
</feature>
<feature type="turn" evidence="2">
    <location>
        <begin position="125"/>
        <end position="128"/>
    </location>
</feature>
<name>ANFG_AZOVI</name>
<protein>
    <recommendedName>
        <fullName>Nitrogenase iron-iron protein delta chain</fullName>
        <ecNumber>1.18.6.1</ecNumber>
    </recommendedName>
    <alternativeName>
        <fullName>Dinitrogenase 3 subunit delta</fullName>
    </alternativeName>
    <alternativeName>
        <fullName>Nitrogenase component I</fullName>
    </alternativeName>
</protein>
<gene>
    <name type="primary">anfG</name>
</gene>
<comment type="function">
    <text>The key enzymatic reactions in nitrogen fixation are catalyzed by the nitrogenase complex, which has 2 components: the iron protein (component 2) and a component 1 which is either a molybdenum-iron protein, a vanadium-iron, or an iron-iron protein.</text>
</comment>
<comment type="catalytic activity">
    <reaction>
        <text>N2 + 8 reduced [2Fe-2S]-[ferredoxin] + 16 ATP + 16 H2O = H2 + 8 oxidized [2Fe-2S]-[ferredoxin] + 2 NH4(+) + 16 ADP + 16 phosphate + 6 H(+)</text>
        <dbReference type="Rhea" id="RHEA:21448"/>
        <dbReference type="Rhea" id="RHEA-COMP:10000"/>
        <dbReference type="Rhea" id="RHEA-COMP:10001"/>
        <dbReference type="ChEBI" id="CHEBI:15377"/>
        <dbReference type="ChEBI" id="CHEBI:15378"/>
        <dbReference type="ChEBI" id="CHEBI:17997"/>
        <dbReference type="ChEBI" id="CHEBI:18276"/>
        <dbReference type="ChEBI" id="CHEBI:28938"/>
        <dbReference type="ChEBI" id="CHEBI:30616"/>
        <dbReference type="ChEBI" id="CHEBI:33737"/>
        <dbReference type="ChEBI" id="CHEBI:33738"/>
        <dbReference type="ChEBI" id="CHEBI:43474"/>
        <dbReference type="ChEBI" id="CHEBI:456216"/>
        <dbReference type="EC" id="1.18.6.1"/>
    </reaction>
</comment>
<comment type="cofactor">
    <cofactor>
        <name>iron-sulfur cluster</name>
        <dbReference type="ChEBI" id="CHEBI:30408"/>
    </cofactor>
</comment>
<comment type="subunit">
    <text>Hexamer of two alpha, two beta, and two delta chains.</text>
</comment>
<evidence type="ECO:0000269" key="1">
    <source>
    </source>
</evidence>
<evidence type="ECO:0007829" key="2">
    <source>
        <dbReference type="PDB" id="8BOQ"/>
    </source>
</evidence>
<organism>
    <name type="scientific">Azotobacter vinelandii</name>
    <dbReference type="NCBI Taxonomy" id="354"/>
    <lineage>
        <taxon>Bacteria</taxon>
        <taxon>Pseudomonadati</taxon>
        <taxon>Pseudomonadota</taxon>
        <taxon>Gammaproteobacteria</taxon>
        <taxon>Pseudomonadales</taxon>
        <taxon>Pseudomonadaceae</taxon>
        <taxon>Azotobacter</taxon>
    </lineage>
</organism>